<reference key="1">
    <citation type="submission" date="2007-02" db="EMBL/GenBank/DDBJ databases">
        <title>Complete sequence of Mycobacterium sp. JLS.</title>
        <authorList>
            <consortium name="US DOE Joint Genome Institute"/>
            <person name="Copeland A."/>
            <person name="Lucas S."/>
            <person name="Lapidus A."/>
            <person name="Barry K."/>
            <person name="Detter J.C."/>
            <person name="Glavina del Rio T."/>
            <person name="Hammon N."/>
            <person name="Israni S."/>
            <person name="Dalin E."/>
            <person name="Tice H."/>
            <person name="Pitluck S."/>
            <person name="Chain P."/>
            <person name="Malfatti S."/>
            <person name="Shin M."/>
            <person name="Vergez L."/>
            <person name="Schmutz J."/>
            <person name="Larimer F."/>
            <person name="Land M."/>
            <person name="Hauser L."/>
            <person name="Kyrpides N."/>
            <person name="Mikhailova N."/>
            <person name="Miller C.D."/>
            <person name="Anderson A.J."/>
            <person name="Sims R.C."/>
            <person name="Richardson P."/>
        </authorList>
    </citation>
    <scope>NUCLEOTIDE SEQUENCE [LARGE SCALE GENOMIC DNA]</scope>
    <source>
        <strain>JLS</strain>
    </source>
</reference>
<accession>A3PXR3</accession>
<feature type="chain" id="PRO_1000063789" description="3-isopropylmalate dehydratase small subunit">
    <location>
        <begin position="1"/>
        <end position="197"/>
    </location>
</feature>
<keyword id="KW-0028">Amino-acid biosynthesis</keyword>
<keyword id="KW-0100">Branched-chain amino acid biosynthesis</keyword>
<keyword id="KW-0432">Leucine biosynthesis</keyword>
<keyword id="KW-0456">Lyase</keyword>
<comment type="function">
    <text evidence="1">Catalyzes the isomerization between 2-isopropylmalate and 3-isopropylmalate, via the formation of 2-isopropylmaleate.</text>
</comment>
<comment type="catalytic activity">
    <reaction evidence="1">
        <text>(2R,3S)-3-isopropylmalate = (2S)-2-isopropylmalate</text>
        <dbReference type="Rhea" id="RHEA:32287"/>
        <dbReference type="ChEBI" id="CHEBI:1178"/>
        <dbReference type="ChEBI" id="CHEBI:35121"/>
        <dbReference type="EC" id="4.2.1.33"/>
    </reaction>
</comment>
<comment type="pathway">
    <text evidence="1">Amino-acid biosynthesis; L-leucine biosynthesis; L-leucine from 3-methyl-2-oxobutanoate: step 2/4.</text>
</comment>
<comment type="subunit">
    <text evidence="1">Heterodimer of LeuC and LeuD.</text>
</comment>
<comment type="similarity">
    <text evidence="1">Belongs to the LeuD family. LeuD type 1 subfamily.</text>
</comment>
<name>LEUD_MYCSJ</name>
<organism>
    <name type="scientific">Mycobacterium sp. (strain JLS)</name>
    <dbReference type="NCBI Taxonomy" id="164757"/>
    <lineage>
        <taxon>Bacteria</taxon>
        <taxon>Bacillati</taxon>
        <taxon>Actinomycetota</taxon>
        <taxon>Actinomycetes</taxon>
        <taxon>Mycobacteriales</taxon>
        <taxon>Mycobacteriaceae</taxon>
        <taxon>Mycobacterium</taxon>
    </lineage>
</organism>
<protein>
    <recommendedName>
        <fullName evidence="1">3-isopropylmalate dehydratase small subunit</fullName>
        <ecNumber evidence="1">4.2.1.33</ecNumber>
    </recommendedName>
    <alternativeName>
        <fullName evidence="1">Alpha-IPM isomerase</fullName>
        <shortName evidence="1">IPMI</shortName>
    </alternativeName>
    <alternativeName>
        <fullName evidence="1">Isopropylmalate isomerase</fullName>
    </alternativeName>
</protein>
<evidence type="ECO:0000255" key="1">
    <source>
        <dbReference type="HAMAP-Rule" id="MF_01031"/>
    </source>
</evidence>
<proteinExistence type="inferred from homology"/>
<dbReference type="EC" id="4.2.1.33" evidence="1"/>
<dbReference type="EMBL" id="CP000580">
    <property type="protein sequence ID" value="ABN97690.1"/>
    <property type="molecule type" value="Genomic_DNA"/>
</dbReference>
<dbReference type="SMR" id="A3PXR3"/>
<dbReference type="KEGG" id="mjl:Mjls_1902"/>
<dbReference type="HOGENOM" id="CLU_081378_0_1_11"/>
<dbReference type="BioCyc" id="MSP164757:G1G8C-1921-MONOMER"/>
<dbReference type="UniPathway" id="UPA00048">
    <property type="reaction ID" value="UER00071"/>
</dbReference>
<dbReference type="GO" id="GO:0009316">
    <property type="term" value="C:3-isopropylmalate dehydratase complex"/>
    <property type="evidence" value="ECO:0007669"/>
    <property type="project" value="InterPro"/>
</dbReference>
<dbReference type="GO" id="GO:0003861">
    <property type="term" value="F:3-isopropylmalate dehydratase activity"/>
    <property type="evidence" value="ECO:0007669"/>
    <property type="project" value="UniProtKB-UniRule"/>
</dbReference>
<dbReference type="GO" id="GO:0009098">
    <property type="term" value="P:L-leucine biosynthetic process"/>
    <property type="evidence" value="ECO:0007669"/>
    <property type="project" value="UniProtKB-UniRule"/>
</dbReference>
<dbReference type="CDD" id="cd01577">
    <property type="entry name" value="IPMI_Swivel"/>
    <property type="match status" value="1"/>
</dbReference>
<dbReference type="FunFam" id="3.20.19.10:FF:000003">
    <property type="entry name" value="3-isopropylmalate dehydratase small subunit"/>
    <property type="match status" value="1"/>
</dbReference>
<dbReference type="Gene3D" id="3.20.19.10">
    <property type="entry name" value="Aconitase, domain 4"/>
    <property type="match status" value="1"/>
</dbReference>
<dbReference type="HAMAP" id="MF_01031">
    <property type="entry name" value="LeuD_type1"/>
    <property type="match status" value="1"/>
</dbReference>
<dbReference type="InterPro" id="IPR004431">
    <property type="entry name" value="3-IsopropMal_deHydase_ssu"/>
</dbReference>
<dbReference type="InterPro" id="IPR015928">
    <property type="entry name" value="Aconitase/3IPM_dehydase_swvl"/>
</dbReference>
<dbReference type="InterPro" id="IPR000573">
    <property type="entry name" value="AconitaseA/IPMdHydase_ssu_swvl"/>
</dbReference>
<dbReference type="InterPro" id="IPR033940">
    <property type="entry name" value="IPMI_Swivel"/>
</dbReference>
<dbReference type="InterPro" id="IPR050075">
    <property type="entry name" value="LeuD"/>
</dbReference>
<dbReference type="NCBIfam" id="TIGR00171">
    <property type="entry name" value="leuD"/>
    <property type="match status" value="1"/>
</dbReference>
<dbReference type="NCBIfam" id="NF002458">
    <property type="entry name" value="PRK01641.1"/>
    <property type="match status" value="1"/>
</dbReference>
<dbReference type="PANTHER" id="PTHR43345:SF5">
    <property type="entry name" value="3-ISOPROPYLMALATE DEHYDRATASE SMALL SUBUNIT"/>
    <property type="match status" value="1"/>
</dbReference>
<dbReference type="PANTHER" id="PTHR43345">
    <property type="entry name" value="3-ISOPROPYLMALATE DEHYDRATASE SMALL SUBUNIT 2-RELATED-RELATED"/>
    <property type="match status" value="1"/>
</dbReference>
<dbReference type="Pfam" id="PF00694">
    <property type="entry name" value="Aconitase_C"/>
    <property type="match status" value="1"/>
</dbReference>
<dbReference type="SUPFAM" id="SSF52016">
    <property type="entry name" value="LeuD/IlvD-like"/>
    <property type="match status" value="1"/>
</dbReference>
<sequence length="197" mass="22188">MEAFRTHTGIGVPLRRSNVDTDQIIPAVYLKRVTRTGFEDGLFAAWRNDPSFVLNLPPFDRGSVLVAGPDFGTGSSREHAVWALMDYGFRVVISSRFADIFRGNAGKAGLLAAEVNQNDVELIWKLIEQNPGLEITVNLQDRNIIAGTVMVPFTIDDYTAWRLLEGLDDIGLTLRKQSEIEDYERRRPSWKPRTLPV</sequence>
<gene>
    <name evidence="1" type="primary">leuD</name>
    <name type="ordered locus">Mjls_1902</name>
</gene>